<name>RPOC_SHESA</name>
<protein>
    <recommendedName>
        <fullName evidence="1">DNA-directed RNA polymerase subunit beta'</fullName>
        <shortName evidence="1">RNAP subunit beta'</shortName>
        <ecNumber evidence="1">2.7.7.6</ecNumber>
    </recommendedName>
    <alternativeName>
        <fullName evidence="1">RNA polymerase subunit beta'</fullName>
    </alternativeName>
    <alternativeName>
        <fullName evidence="1">Transcriptase subunit beta'</fullName>
    </alternativeName>
</protein>
<proteinExistence type="inferred from homology"/>
<evidence type="ECO:0000255" key="1">
    <source>
        <dbReference type="HAMAP-Rule" id="MF_01322"/>
    </source>
</evidence>
<dbReference type="EC" id="2.7.7.6" evidence="1"/>
<dbReference type="EMBL" id="CP000469">
    <property type="protein sequence ID" value="ABK46437.1"/>
    <property type="molecule type" value="Genomic_DNA"/>
</dbReference>
<dbReference type="RefSeq" id="WP_011715458.1">
    <property type="nucleotide sequence ID" value="NC_008577.1"/>
</dbReference>
<dbReference type="SMR" id="A0KRL8"/>
<dbReference type="STRING" id="94122.Shewana3_0193"/>
<dbReference type="GeneID" id="94726180"/>
<dbReference type="KEGG" id="shn:Shewana3_0193"/>
<dbReference type="eggNOG" id="COG0086">
    <property type="taxonomic scope" value="Bacteria"/>
</dbReference>
<dbReference type="HOGENOM" id="CLU_000524_3_1_6"/>
<dbReference type="OrthoDB" id="9815296at2"/>
<dbReference type="Proteomes" id="UP000002589">
    <property type="component" value="Chromosome"/>
</dbReference>
<dbReference type="GO" id="GO:0000428">
    <property type="term" value="C:DNA-directed RNA polymerase complex"/>
    <property type="evidence" value="ECO:0007669"/>
    <property type="project" value="UniProtKB-KW"/>
</dbReference>
<dbReference type="GO" id="GO:0003677">
    <property type="term" value="F:DNA binding"/>
    <property type="evidence" value="ECO:0007669"/>
    <property type="project" value="UniProtKB-UniRule"/>
</dbReference>
<dbReference type="GO" id="GO:0003899">
    <property type="term" value="F:DNA-directed RNA polymerase activity"/>
    <property type="evidence" value="ECO:0007669"/>
    <property type="project" value="UniProtKB-UniRule"/>
</dbReference>
<dbReference type="GO" id="GO:0000287">
    <property type="term" value="F:magnesium ion binding"/>
    <property type="evidence" value="ECO:0007669"/>
    <property type="project" value="UniProtKB-UniRule"/>
</dbReference>
<dbReference type="GO" id="GO:0008270">
    <property type="term" value="F:zinc ion binding"/>
    <property type="evidence" value="ECO:0007669"/>
    <property type="project" value="UniProtKB-UniRule"/>
</dbReference>
<dbReference type="GO" id="GO:0006351">
    <property type="term" value="P:DNA-templated transcription"/>
    <property type="evidence" value="ECO:0007669"/>
    <property type="project" value="UniProtKB-UniRule"/>
</dbReference>
<dbReference type="CDD" id="cd02655">
    <property type="entry name" value="RNAP_beta'_C"/>
    <property type="match status" value="1"/>
</dbReference>
<dbReference type="CDD" id="cd01609">
    <property type="entry name" value="RNAP_beta'_N"/>
    <property type="match status" value="1"/>
</dbReference>
<dbReference type="FunFam" id="1.10.132.30:FF:000003">
    <property type="entry name" value="DNA-directed RNA polymerase subunit beta"/>
    <property type="match status" value="1"/>
</dbReference>
<dbReference type="FunFam" id="1.10.150.390:FF:000002">
    <property type="entry name" value="DNA-directed RNA polymerase subunit beta"/>
    <property type="match status" value="1"/>
</dbReference>
<dbReference type="FunFam" id="1.10.40.90:FF:000001">
    <property type="entry name" value="DNA-directed RNA polymerase subunit beta"/>
    <property type="match status" value="1"/>
</dbReference>
<dbReference type="FunFam" id="4.10.860.120:FF:000001">
    <property type="entry name" value="DNA-directed RNA polymerase subunit beta"/>
    <property type="match status" value="1"/>
</dbReference>
<dbReference type="Gene3D" id="1.10.132.30">
    <property type="match status" value="1"/>
</dbReference>
<dbReference type="Gene3D" id="1.10.150.390">
    <property type="match status" value="1"/>
</dbReference>
<dbReference type="Gene3D" id="1.10.1790.20">
    <property type="match status" value="1"/>
</dbReference>
<dbReference type="Gene3D" id="1.10.40.90">
    <property type="match status" value="1"/>
</dbReference>
<dbReference type="Gene3D" id="2.40.40.20">
    <property type="match status" value="1"/>
</dbReference>
<dbReference type="Gene3D" id="2.40.50.100">
    <property type="match status" value="3"/>
</dbReference>
<dbReference type="Gene3D" id="4.10.860.120">
    <property type="entry name" value="RNA polymerase II, clamp domain"/>
    <property type="match status" value="1"/>
</dbReference>
<dbReference type="Gene3D" id="1.10.274.100">
    <property type="entry name" value="RNA polymerase Rpb1, domain 3"/>
    <property type="match status" value="1"/>
</dbReference>
<dbReference type="HAMAP" id="MF_01322">
    <property type="entry name" value="RNApol_bact_RpoC"/>
    <property type="match status" value="1"/>
</dbReference>
<dbReference type="InterPro" id="IPR045867">
    <property type="entry name" value="DNA-dir_RpoC_beta_prime"/>
</dbReference>
<dbReference type="InterPro" id="IPR012754">
    <property type="entry name" value="DNA-dir_RpoC_beta_prime_bact"/>
</dbReference>
<dbReference type="InterPro" id="IPR000722">
    <property type="entry name" value="RNA_pol_asu"/>
</dbReference>
<dbReference type="InterPro" id="IPR006592">
    <property type="entry name" value="RNA_pol_N"/>
</dbReference>
<dbReference type="InterPro" id="IPR007080">
    <property type="entry name" value="RNA_pol_Rpb1_1"/>
</dbReference>
<dbReference type="InterPro" id="IPR007066">
    <property type="entry name" value="RNA_pol_Rpb1_3"/>
</dbReference>
<dbReference type="InterPro" id="IPR042102">
    <property type="entry name" value="RNA_pol_Rpb1_3_sf"/>
</dbReference>
<dbReference type="InterPro" id="IPR007083">
    <property type="entry name" value="RNA_pol_Rpb1_4"/>
</dbReference>
<dbReference type="InterPro" id="IPR007081">
    <property type="entry name" value="RNA_pol_Rpb1_5"/>
</dbReference>
<dbReference type="InterPro" id="IPR044893">
    <property type="entry name" value="RNA_pol_Rpb1_clamp_domain"/>
</dbReference>
<dbReference type="InterPro" id="IPR038120">
    <property type="entry name" value="Rpb1_funnel_sf"/>
</dbReference>
<dbReference type="NCBIfam" id="TIGR02386">
    <property type="entry name" value="rpoC_TIGR"/>
    <property type="match status" value="1"/>
</dbReference>
<dbReference type="PANTHER" id="PTHR19376">
    <property type="entry name" value="DNA-DIRECTED RNA POLYMERASE"/>
    <property type="match status" value="1"/>
</dbReference>
<dbReference type="PANTHER" id="PTHR19376:SF54">
    <property type="entry name" value="DNA-DIRECTED RNA POLYMERASE SUBUNIT BETA"/>
    <property type="match status" value="1"/>
</dbReference>
<dbReference type="Pfam" id="PF04997">
    <property type="entry name" value="RNA_pol_Rpb1_1"/>
    <property type="match status" value="1"/>
</dbReference>
<dbReference type="Pfam" id="PF00623">
    <property type="entry name" value="RNA_pol_Rpb1_2"/>
    <property type="match status" value="2"/>
</dbReference>
<dbReference type="Pfam" id="PF04983">
    <property type="entry name" value="RNA_pol_Rpb1_3"/>
    <property type="match status" value="1"/>
</dbReference>
<dbReference type="Pfam" id="PF05000">
    <property type="entry name" value="RNA_pol_Rpb1_4"/>
    <property type="match status" value="1"/>
</dbReference>
<dbReference type="Pfam" id="PF04998">
    <property type="entry name" value="RNA_pol_Rpb1_5"/>
    <property type="match status" value="1"/>
</dbReference>
<dbReference type="SMART" id="SM00663">
    <property type="entry name" value="RPOLA_N"/>
    <property type="match status" value="1"/>
</dbReference>
<dbReference type="SUPFAM" id="SSF64484">
    <property type="entry name" value="beta and beta-prime subunits of DNA dependent RNA-polymerase"/>
    <property type="match status" value="1"/>
</dbReference>
<comment type="function">
    <text evidence="1">DNA-dependent RNA polymerase catalyzes the transcription of DNA into RNA using the four ribonucleoside triphosphates as substrates.</text>
</comment>
<comment type="catalytic activity">
    <reaction evidence="1">
        <text>RNA(n) + a ribonucleoside 5'-triphosphate = RNA(n+1) + diphosphate</text>
        <dbReference type="Rhea" id="RHEA:21248"/>
        <dbReference type="Rhea" id="RHEA-COMP:14527"/>
        <dbReference type="Rhea" id="RHEA-COMP:17342"/>
        <dbReference type="ChEBI" id="CHEBI:33019"/>
        <dbReference type="ChEBI" id="CHEBI:61557"/>
        <dbReference type="ChEBI" id="CHEBI:140395"/>
        <dbReference type="EC" id="2.7.7.6"/>
    </reaction>
</comment>
<comment type="cofactor">
    <cofactor evidence="1">
        <name>Mg(2+)</name>
        <dbReference type="ChEBI" id="CHEBI:18420"/>
    </cofactor>
    <text evidence="1">Binds 1 Mg(2+) ion per subunit.</text>
</comment>
<comment type="cofactor">
    <cofactor evidence="1">
        <name>Zn(2+)</name>
        <dbReference type="ChEBI" id="CHEBI:29105"/>
    </cofactor>
    <text evidence="1">Binds 2 Zn(2+) ions per subunit.</text>
</comment>
<comment type="subunit">
    <text evidence="1">The RNAP catalytic core consists of 2 alpha, 1 beta, 1 beta' and 1 omega subunit. When a sigma factor is associated with the core the holoenzyme is formed, which can initiate transcription.</text>
</comment>
<comment type="similarity">
    <text evidence="1">Belongs to the RNA polymerase beta' chain family.</text>
</comment>
<accession>A0KRL8</accession>
<feature type="chain" id="PRO_0000308879" description="DNA-directed RNA polymerase subunit beta'">
    <location>
        <begin position="1"/>
        <end position="1405"/>
    </location>
</feature>
<feature type="binding site" evidence="1">
    <location>
        <position position="70"/>
    </location>
    <ligand>
        <name>Zn(2+)</name>
        <dbReference type="ChEBI" id="CHEBI:29105"/>
        <label>1</label>
    </ligand>
</feature>
<feature type="binding site" evidence="1">
    <location>
        <position position="72"/>
    </location>
    <ligand>
        <name>Zn(2+)</name>
        <dbReference type="ChEBI" id="CHEBI:29105"/>
        <label>1</label>
    </ligand>
</feature>
<feature type="binding site" evidence="1">
    <location>
        <position position="85"/>
    </location>
    <ligand>
        <name>Zn(2+)</name>
        <dbReference type="ChEBI" id="CHEBI:29105"/>
        <label>1</label>
    </ligand>
</feature>
<feature type="binding site" evidence="1">
    <location>
        <position position="88"/>
    </location>
    <ligand>
        <name>Zn(2+)</name>
        <dbReference type="ChEBI" id="CHEBI:29105"/>
        <label>1</label>
    </ligand>
</feature>
<feature type="binding site" evidence="1">
    <location>
        <position position="460"/>
    </location>
    <ligand>
        <name>Mg(2+)</name>
        <dbReference type="ChEBI" id="CHEBI:18420"/>
    </ligand>
</feature>
<feature type="binding site" evidence="1">
    <location>
        <position position="462"/>
    </location>
    <ligand>
        <name>Mg(2+)</name>
        <dbReference type="ChEBI" id="CHEBI:18420"/>
    </ligand>
</feature>
<feature type="binding site" evidence="1">
    <location>
        <position position="464"/>
    </location>
    <ligand>
        <name>Mg(2+)</name>
        <dbReference type="ChEBI" id="CHEBI:18420"/>
    </ligand>
</feature>
<feature type="binding site" evidence="1">
    <location>
        <position position="814"/>
    </location>
    <ligand>
        <name>Zn(2+)</name>
        <dbReference type="ChEBI" id="CHEBI:29105"/>
        <label>2</label>
    </ligand>
</feature>
<feature type="binding site" evidence="1">
    <location>
        <position position="888"/>
    </location>
    <ligand>
        <name>Zn(2+)</name>
        <dbReference type="ChEBI" id="CHEBI:29105"/>
        <label>2</label>
    </ligand>
</feature>
<feature type="binding site" evidence="1">
    <location>
        <position position="895"/>
    </location>
    <ligand>
        <name>Zn(2+)</name>
        <dbReference type="ChEBI" id="CHEBI:29105"/>
        <label>2</label>
    </ligand>
</feature>
<feature type="binding site" evidence="1">
    <location>
        <position position="898"/>
    </location>
    <ligand>
        <name>Zn(2+)</name>
        <dbReference type="ChEBI" id="CHEBI:29105"/>
        <label>2</label>
    </ligand>
</feature>
<sequence>MKDLLKFLKQQSKTEEFNGIKIGLASPDLIRSWSFGEVKKPETINYRTFKPEREGLFCARIFGPVKDYECLCGKYKRLKHRGVICEKCGVEVTQTKVRRERMGHIELASPVAHIWFLKSLPSRIGLMLDMTLRDIERVLYFESFVVIEPGMTSLERGQMLTEENYLDALEEYGDEFEAKMGAEAVLELLRAIDLEKEIEQMREELPSINSETRRKKVTKRLKLMEAFHTSGNKPEWMILKVLPVLPPDLRPLVPLDGGRFATSDLNDLYRRVINRNNRLKRLLDLAAPDIIVRNEKRMLQESVDALLDNGRRGRAITGSNKRPLKSLADMIKGKQGRFRQNLLGKRVDYSGRSVITVGPTLRLHQCGLPKKMALELFKPFIYGKLEGRGLATTIKAAKKMVEREVAEVWDVLDEVIREHPVMLNRAPTLHRLGIQAFEPVLIEGKAIQLHPLVCAAYNADFDGDQMAVHVPLTLEAQLEARALMMSTNNILSPANGEPVITPSQDVVLGLYYTSRERINGRGEGMYFMSVAEVEKAYATGAAELHARVKVRITETVIGDNGERTEQRRIVDTTVGRALLSQILPAGLSFDLVNQNMGKKQISKLLNTCYRQLGLKDTVIFADQLMYTGFRYATISGASVGIDDMVIPAEKYTLVADAEAEVLEIQEQFQSGLVTAGERYNKVIDIWASANEKVSKAMMENLSTETVINRDGVEEKQASFNSIYMMADSGARGSAAQIRQLAGMRGLMAKPDGSIIETPIVANFREGLNVLQYFISTHGARKGLADTALKTANSGYLTRRLVDVAQDLVVIEDDCGTHEGLTMKPLIEGGDVVEPLRERVLGRVVAVDVLYPGTEDVLAPRNTLLDEAWCDKLEEHSIDEVIVRSVITCDTDFGVCAACYGRDLARGHLINHGEAIGVVAAQSIGEPGTQLTMRTFHIGGAASRASAENNVQVKNSGSLKLHNAKYVTNTDGKLVIVSRSSELAIIDELGREKERYKVPYGTVLEKLEEAAVEAGDIIANWDPHTHPIITEVAGSIKFVDMIDGVTMTRQTDELTGLSSIVILDVGQRGSAGKEMRPMIRLVGADGSDLMIPGTEVPAQYFLPGSAIVNLDDNAQIAVGDALARIPQESSKTRDITGGLPRVADLFEARKPKEPAILAEISGTISFGKETKGKRRLVITPADGGEQYEEMIPKWRNLNVFEGEKVERGEVIADGPEAAHDILRLRGIHNVANYIVNEVQDVYRLQGVKINDKHIEVIIRQMLRKCVITSAGDSEFLEGEQVEVSRVKIANRDLIEQGKVPATFERELLGITKASLATESFISAASFQETTRVLTEAAVGGKSDNLRGLKENVIVGRLIPAGTGYAYHKTRNDARAKKDEPVVVNKITASEAEQNLADLLNLAGSQD</sequence>
<organism>
    <name type="scientific">Shewanella sp. (strain ANA-3)</name>
    <dbReference type="NCBI Taxonomy" id="94122"/>
    <lineage>
        <taxon>Bacteria</taxon>
        <taxon>Pseudomonadati</taxon>
        <taxon>Pseudomonadota</taxon>
        <taxon>Gammaproteobacteria</taxon>
        <taxon>Alteromonadales</taxon>
        <taxon>Shewanellaceae</taxon>
        <taxon>Shewanella</taxon>
    </lineage>
</organism>
<gene>
    <name evidence="1" type="primary">rpoC</name>
    <name type="ordered locus">Shewana3_0193</name>
</gene>
<reference key="1">
    <citation type="submission" date="2006-09" db="EMBL/GenBank/DDBJ databases">
        <title>Complete sequence of chromosome 1 of Shewanella sp. ANA-3.</title>
        <authorList>
            <person name="Copeland A."/>
            <person name="Lucas S."/>
            <person name="Lapidus A."/>
            <person name="Barry K."/>
            <person name="Detter J.C."/>
            <person name="Glavina del Rio T."/>
            <person name="Hammon N."/>
            <person name="Israni S."/>
            <person name="Dalin E."/>
            <person name="Tice H."/>
            <person name="Pitluck S."/>
            <person name="Chertkov O."/>
            <person name="Brettin T."/>
            <person name="Bruce D."/>
            <person name="Han C."/>
            <person name="Tapia R."/>
            <person name="Gilna P."/>
            <person name="Schmutz J."/>
            <person name="Larimer F."/>
            <person name="Land M."/>
            <person name="Hauser L."/>
            <person name="Kyrpides N."/>
            <person name="Kim E."/>
            <person name="Newman D."/>
            <person name="Salticov C."/>
            <person name="Konstantinidis K."/>
            <person name="Klappenback J."/>
            <person name="Tiedje J."/>
            <person name="Richardson P."/>
        </authorList>
    </citation>
    <scope>NUCLEOTIDE SEQUENCE [LARGE SCALE GENOMIC DNA]</scope>
    <source>
        <strain>ANA-3</strain>
    </source>
</reference>
<keyword id="KW-0240">DNA-directed RNA polymerase</keyword>
<keyword id="KW-0460">Magnesium</keyword>
<keyword id="KW-0479">Metal-binding</keyword>
<keyword id="KW-0548">Nucleotidyltransferase</keyword>
<keyword id="KW-0804">Transcription</keyword>
<keyword id="KW-0808">Transferase</keyword>
<keyword id="KW-0862">Zinc</keyword>